<reference key="1">
    <citation type="journal article" date="2002" name="Nat. Biotechnol.">
        <title>Genome sequence of the dissimilatory metal ion-reducing bacterium Shewanella oneidensis.</title>
        <authorList>
            <person name="Heidelberg J.F."/>
            <person name="Paulsen I.T."/>
            <person name="Nelson K.E."/>
            <person name="Gaidos E.J."/>
            <person name="Nelson W.C."/>
            <person name="Read T.D."/>
            <person name="Eisen J.A."/>
            <person name="Seshadri R."/>
            <person name="Ward N.L."/>
            <person name="Methe B.A."/>
            <person name="Clayton R.A."/>
            <person name="Meyer T."/>
            <person name="Tsapin A."/>
            <person name="Scott J."/>
            <person name="Beanan M.J."/>
            <person name="Brinkac L.M."/>
            <person name="Daugherty S.C."/>
            <person name="DeBoy R.T."/>
            <person name="Dodson R.J."/>
            <person name="Durkin A.S."/>
            <person name="Haft D.H."/>
            <person name="Kolonay J.F."/>
            <person name="Madupu R."/>
            <person name="Peterson J.D."/>
            <person name="Umayam L.A."/>
            <person name="White O."/>
            <person name="Wolf A.M."/>
            <person name="Vamathevan J.J."/>
            <person name="Weidman J.F."/>
            <person name="Impraim M."/>
            <person name="Lee K."/>
            <person name="Berry K.J."/>
            <person name="Lee C."/>
            <person name="Mueller J."/>
            <person name="Khouri H.M."/>
            <person name="Gill J."/>
            <person name="Utterback T.R."/>
            <person name="McDonald L.A."/>
            <person name="Feldblyum T.V."/>
            <person name="Smith H.O."/>
            <person name="Venter J.C."/>
            <person name="Nealson K.H."/>
            <person name="Fraser C.M."/>
        </authorList>
    </citation>
    <scope>NUCLEOTIDE SEQUENCE [LARGE SCALE GENOMIC DNA]</scope>
    <source>
        <strain>ATCC 700550 / JCM 31522 / CIP 106686 / LMG 19005 / NCIMB 14063 / MR-1</strain>
    </source>
</reference>
<sequence length="327" mass="36398">MGHAARGKVGVLLLNLGTPDAPTASAVRRYLAEFLSDPRVVEIPKLLWMLILYGIVLRVRPAKSAALYQKVWTEAGSPLMDISLRQTAKLSDKLTADGHQVSVHLAMRYGNPSVASTLREMHKQGIDKLVVLPLYPQYAAPTTGSAFDAIAKELSQWRYLPSLHFINTYHDNPDFIAALVNSIRDDFDKHGKPQKLVLSYHGMPERNLHLGDPYYCFCMKTTRLVAEQLGLSKDEFAITFQSRFGKAKWLQPYTDATMAALPSQGVRDVAIVCPAFSADCLETLEEIVGENGHIFTHAGGEKFRYIPALNDNDDHIAMMANLVKPYL</sequence>
<proteinExistence type="inferred from homology"/>
<dbReference type="EC" id="4.98.1.1" evidence="1"/>
<dbReference type="EMBL" id="AE014299">
    <property type="protein sequence ID" value="AAN56346.1"/>
    <property type="molecule type" value="Genomic_DNA"/>
</dbReference>
<dbReference type="RefSeq" id="NP_718902.1">
    <property type="nucleotide sequence ID" value="NC_004347.2"/>
</dbReference>
<dbReference type="RefSeq" id="WP_011073218.1">
    <property type="nucleotide sequence ID" value="NC_004347.2"/>
</dbReference>
<dbReference type="SMR" id="Q8EBZ7"/>
<dbReference type="STRING" id="211586.SO_3348"/>
<dbReference type="PaxDb" id="211586-SO_3348"/>
<dbReference type="KEGG" id="son:SO_3348"/>
<dbReference type="PATRIC" id="fig|1028802.3.peg.1931"/>
<dbReference type="eggNOG" id="COG0276">
    <property type="taxonomic scope" value="Bacteria"/>
</dbReference>
<dbReference type="HOGENOM" id="CLU_018884_0_0_6"/>
<dbReference type="OrthoDB" id="9809741at2"/>
<dbReference type="PhylomeDB" id="Q8EBZ7"/>
<dbReference type="BioCyc" id="SONE211586:G1GMP-3116-MONOMER"/>
<dbReference type="UniPathway" id="UPA00252">
    <property type="reaction ID" value="UER00325"/>
</dbReference>
<dbReference type="Proteomes" id="UP000008186">
    <property type="component" value="Chromosome"/>
</dbReference>
<dbReference type="GO" id="GO:0005737">
    <property type="term" value="C:cytoplasm"/>
    <property type="evidence" value="ECO:0007669"/>
    <property type="project" value="UniProtKB-SubCell"/>
</dbReference>
<dbReference type="GO" id="GO:0004325">
    <property type="term" value="F:ferrochelatase activity"/>
    <property type="evidence" value="ECO:0000318"/>
    <property type="project" value="GO_Central"/>
</dbReference>
<dbReference type="GO" id="GO:0046872">
    <property type="term" value="F:metal ion binding"/>
    <property type="evidence" value="ECO:0007669"/>
    <property type="project" value="UniProtKB-KW"/>
</dbReference>
<dbReference type="GO" id="GO:0006783">
    <property type="term" value="P:heme biosynthetic process"/>
    <property type="evidence" value="ECO:0000318"/>
    <property type="project" value="GO_Central"/>
</dbReference>
<dbReference type="CDD" id="cd00419">
    <property type="entry name" value="Ferrochelatase_C"/>
    <property type="match status" value="1"/>
</dbReference>
<dbReference type="CDD" id="cd03411">
    <property type="entry name" value="Ferrochelatase_N"/>
    <property type="match status" value="1"/>
</dbReference>
<dbReference type="FunFam" id="3.40.50.1400:FF:000002">
    <property type="entry name" value="Ferrochelatase"/>
    <property type="match status" value="1"/>
</dbReference>
<dbReference type="Gene3D" id="3.40.50.1400">
    <property type="match status" value="2"/>
</dbReference>
<dbReference type="HAMAP" id="MF_00323">
    <property type="entry name" value="Ferrochelatase"/>
    <property type="match status" value="1"/>
</dbReference>
<dbReference type="InterPro" id="IPR001015">
    <property type="entry name" value="Ferrochelatase"/>
</dbReference>
<dbReference type="InterPro" id="IPR019772">
    <property type="entry name" value="Ferrochelatase_AS"/>
</dbReference>
<dbReference type="InterPro" id="IPR033644">
    <property type="entry name" value="Ferrochelatase_C"/>
</dbReference>
<dbReference type="InterPro" id="IPR033659">
    <property type="entry name" value="Ferrochelatase_N"/>
</dbReference>
<dbReference type="NCBIfam" id="TIGR00109">
    <property type="entry name" value="hemH"/>
    <property type="match status" value="1"/>
</dbReference>
<dbReference type="PANTHER" id="PTHR11108">
    <property type="entry name" value="FERROCHELATASE"/>
    <property type="match status" value="1"/>
</dbReference>
<dbReference type="PANTHER" id="PTHR11108:SF1">
    <property type="entry name" value="FERROCHELATASE, MITOCHONDRIAL"/>
    <property type="match status" value="1"/>
</dbReference>
<dbReference type="Pfam" id="PF00762">
    <property type="entry name" value="Ferrochelatase"/>
    <property type="match status" value="1"/>
</dbReference>
<dbReference type="SUPFAM" id="SSF53800">
    <property type="entry name" value="Chelatase"/>
    <property type="match status" value="1"/>
</dbReference>
<dbReference type="PROSITE" id="PS00534">
    <property type="entry name" value="FERROCHELATASE"/>
    <property type="match status" value="1"/>
</dbReference>
<gene>
    <name evidence="1" type="primary">hemH2</name>
    <name type="synonym">hemH-2</name>
    <name type="ordered locus">SO_3348</name>
</gene>
<organism>
    <name type="scientific">Shewanella oneidensis (strain ATCC 700550 / JCM 31522 / CIP 106686 / LMG 19005 / NCIMB 14063 / MR-1)</name>
    <dbReference type="NCBI Taxonomy" id="211586"/>
    <lineage>
        <taxon>Bacteria</taxon>
        <taxon>Pseudomonadati</taxon>
        <taxon>Pseudomonadota</taxon>
        <taxon>Gammaproteobacteria</taxon>
        <taxon>Alteromonadales</taxon>
        <taxon>Shewanellaceae</taxon>
        <taxon>Shewanella</taxon>
    </lineage>
</organism>
<protein>
    <recommendedName>
        <fullName evidence="1">Ferrochelatase 2</fullName>
        <ecNumber evidence="1">4.98.1.1</ecNumber>
    </recommendedName>
    <alternativeName>
        <fullName evidence="1">Heme synthase 2</fullName>
    </alternativeName>
    <alternativeName>
        <fullName evidence="1">Protoheme ferro-lyase 2</fullName>
    </alternativeName>
</protein>
<feature type="chain" id="PRO_0000175199" description="Ferrochelatase 2">
    <location>
        <begin position="1"/>
        <end position="327"/>
    </location>
</feature>
<feature type="binding site" evidence="1">
    <location>
        <position position="201"/>
    </location>
    <ligand>
        <name>Fe cation</name>
        <dbReference type="ChEBI" id="CHEBI:24875"/>
    </ligand>
</feature>
<feature type="binding site" evidence="1">
    <location>
        <position position="282"/>
    </location>
    <ligand>
        <name>Fe cation</name>
        <dbReference type="ChEBI" id="CHEBI:24875"/>
    </ligand>
</feature>
<comment type="function">
    <text evidence="1">Catalyzes the ferrous insertion into protoporphyrin IX.</text>
</comment>
<comment type="catalytic activity">
    <reaction evidence="1">
        <text>heme b + 2 H(+) = protoporphyrin IX + Fe(2+)</text>
        <dbReference type="Rhea" id="RHEA:22584"/>
        <dbReference type="ChEBI" id="CHEBI:15378"/>
        <dbReference type="ChEBI" id="CHEBI:29033"/>
        <dbReference type="ChEBI" id="CHEBI:57306"/>
        <dbReference type="ChEBI" id="CHEBI:60344"/>
        <dbReference type="EC" id="4.98.1.1"/>
    </reaction>
</comment>
<comment type="pathway">
    <text evidence="1">Porphyrin-containing compound metabolism; protoheme biosynthesis; protoheme from protoporphyrin-IX: step 1/1.</text>
</comment>
<comment type="subcellular location">
    <subcellularLocation>
        <location evidence="1">Cytoplasm</location>
    </subcellularLocation>
</comment>
<comment type="similarity">
    <text evidence="1 2">Belongs to the ferrochelatase family.</text>
</comment>
<keyword id="KW-0963">Cytoplasm</keyword>
<keyword id="KW-0350">Heme biosynthesis</keyword>
<keyword id="KW-0408">Iron</keyword>
<keyword id="KW-0456">Lyase</keyword>
<keyword id="KW-0479">Metal-binding</keyword>
<keyword id="KW-0627">Porphyrin biosynthesis</keyword>
<keyword id="KW-1185">Reference proteome</keyword>
<accession>Q8EBZ7</accession>
<name>HEMH2_SHEON</name>
<evidence type="ECO:0000255" key="1">
    <source>
        <dbReference type="HAMAP-Rule" id="MF_00323"/>
    </source>
</evidence>
<evidence type="ECO:0000305" key="2"/>